<gene>
    <name evidence="1" type="primary">glgA</name>
    <name type="ordered locus">BA_5120</name>
    <name type="ordered locus">GBAA_5120</name>
    <name type="ordered locus">BAS4758</name>
</gene>
<name>GLGA_BACAN</name>
<accession>Q81K85</accession>
<accession>Q6HRN6</accession>
<accession>Q6KL02</accession>
<feature type="chain" id="PRO_0000188590" description="Glycogen synthase">
    <location>
        <begin position="1"/>
        <end position="476"/>
    </location>
</feature>
<feature type="binding site" evidence="1">
    <location>
        <position position="15"/>
    </location>
    <ligand>
        <name>ADP-alpha-D-glucose</name>
        <dbReference type="ChEBI" id="CHEBI:57498"/>
    </ligand>
</feature>
<sequence length="476" mass="54945">MNILFAVSECVPFVKSGGLADVAGALPKELKKLGVEVRIILPNYSLIPQKLRDGCTLHKVINVPLGWRNQYCGILKGEQDGITYYLIDNEYYFKRDSLYGHYDDGERFSYFSKAVLECIPHLDFEVDVLHSHDWHTAMVNFLLREKYQDNPLYEHIKTVYTIHNLQFQGVFPPEVMYDLLELGDEYFHSEQLEFYGNVNFMKGGIIASDQITAVSPTYKEEIQYEFFGEKLDGLLRKYNDKLSGIVNGIDTSVYNPETDSYITAQYDADSLYEKNENKRALQRYFGLPEKEDTPIISMVTRLTKQKGLDLVRTVFREIMEEDVQCIILGSGDSEYEQFFEWMAYEYPEKVKVYIGFNEELAHQVYAGSDLFLMPSLFEPCGLGQLIALAYGTIPIVRETGGLNDTVQSYDEETGEGNGFSFTNFNAHDMLHTVLRAIEFYHDKSVWEQLVKQAMTEDYSWEKSALAYKKLYKSLME</sequence>
<keyword id="KW-0320">Glycogen biosynthesis</keyword>
<keyword id="KW-0328">Glycosyltransferase</keyword>
<keyword id="KW-1185">Reference proteome</keyword>
<keyword id="KW-0808">Transferase</keyword>
<organism>
    <name type="scientific">Bacillus anthracis</name>
    <dbReference type="NCBI Taxonomy" id="1392"/>
    <lineage>
        <taxon>Bacteria</taxon>
        <taxon>Bacillati</taxon>
        <taxon>Bacillota</taxon>
        <taxon>Bacilli</taxon>
        <taxon>Bacillales</taxon>
        <taxon>Bacillaceae</taxon>
        <taxon>Bacillus</taxon>
        <taxon>Bacillus cereus group</taxon>
    </lineage>
</organism>
<dbReference type="EC" id="2.4.1.21" evidence="1"/>
<dbReference type="EMBL" id="AE016879">
    <property type="protein sequence ID" value="AAP28792.1"/>
    <property type="molecule type" value="Genomic_DNA"/>
</dbReference>
<dbReference type="EMBL" id="AE017334">
    <property type="protein sequence ID" value="AAT34248.2"/>
    <property type="molecule type" value="Genomic_DNA"/>
</dbReference>
<dbReference type="EMBL" id="AE017225">
    <property type="protein sequence ID" value="AAT57052.1"/>
    <property type="status" value="ALT_INIT"/>
    <property type="molecule type" value="Genomic_DNA"/>
</dbReference>
<dbReference type="RefSeq" id="NP_847306.1">
    <property type="nucleotide sequence ID" value="NC_003997.3"/>
</dbReference>
<dbReference type="RefSeq" id="WP_011053260.1">
    <property type="nucleotide sequence ID" value="NZ_WXXJ01000032.1"/>
</dbReference>
<dbReference type="SMR" id="Q81K85"/>
<dbReference type="IntAct" id="Q81K85">
    <property type="interactions" value="9"/>
</dbReference>
<dbReference type="STRING" id="261594.GBAA_5120"/>
<dbReference type="CAZy" id="GT5">
    <property type="family name" value="Glycosyltransferase Family 5"/>
</dbReference>
<dbReference type="DNASU" id="1084436"/>
<dbReference type="GeneID" id="45024725"/>
<dbReference type="KEGG" id="ban:BA_5120"/>
<dbReference type="KEGG" id="bar:GBAA_5120"/>
<dbReference type="KEGG" id="bat:BAS4758"/>
<dbReference type="PATRIC" id="fig|198094.11.peg.5081"/>
<dbReference type="eggNOG" id="COG0297">
    <property type="taxonomic scope" value="Bacteria"/>
</dbReference>
<dbReference type="HOGENOM" id="CLU_009583_18_2_9"/>
<dbReference type="OrthoDB" id="9808590at2"/>
<dbReference type="UniPathway" id="UPA00164"/>
<dbReference type="Proteomes" id="UP000000427">
    <property type="component" value="Chromosome"/>
</dbReference>
<dbReference type="Proteomes" id="UP000000594">
    <property type="component" value="Chromosome"/>
</dbReference>
<dbReference type="GO" id="GO:0009011">
    <property type="term" value="F:alpha-1,4-glucan glucosyltransferase (ADP-glucose donor) activity"/>
    <property type="evidence" value="ECO:0007669"/>
    <property type="project" value="UniProtKB-UniRule"/>
</dbReference>
<dbReference type="GO" id="GO:0004373">
    <property type="term" value="F:alpha-1,4-glucan glucosyltransferase (UDP-glucose donor) activity"/>
    <property type="evidence" value="ECO:0007669"/>
    <property type="project" value="InterPro"/>
</dbReference>
<dbReference type="GO" id="GO:0005978">
    <property type="term" value="P:glycogen biosynthetic process"/>
    <property type="evidence" value="ECO:0007669"/>
    <property type="project" value="UniProtKB-UniRule"/>
</dbReference>
<dbReference type="CDD" id="cd03791">
    <property type="entry name" value="GT5_Glycogen_synthase_DULL1-like"/>
    <property type="match status" value="1"/>
</dbReference>
<dbReference type="FunFam" id="3.40.50.2000:FF:000175">
    <property type="entry name" value="Glycogen synthase"/>
    <property type="match status" value="1"/>
</dbReference>
<dbReference type="Gene3D" id="3.40.50.2000">
    <property type="entry name" value="Glycogen Phosphorylase B"/>
    <property type="match status" value="2"/>
</dbReference>
<dbReference type="HAMAP" id="MF_00484">
    <property type="entry name" value="Glycogen_synth"/>
    <property type="match status" value="1"/>
</dbReference>
<dbReference type="InterPro" id="IPR001296">
    <property type="entry name" value="Glyco_trans_1"/>
</dbReference>
<dbReference type="InterPro" id="IPR011835">
    <property type="entry name" value="GS/SS"/>
</dbReference>
<dbReference type="InterPro" id="IPR013534">
    <property type="entry name" value="Starch_synth_cat_dom"/>
</dbReference>
<dbReference type="NCBIfam" id="TIGR02095">
    <property type="entry name" value="glgA"/>
    <property type="match status" value="1"/>
</dbReference>
<dbReference type="NCBIfam" id="NF001898">
    <property type="entry name" value="PRK00654.1-1"/>
    <property type="match status" value="1"/>
</dbReference>
<dbReference type="NCBIfam" id="NF001899">
    <property type="entry name" value="PRK00654.1-2"/>
    <property type="match status" value="1"/>
</dbReference>
<dbReference type="PANTHER" id="PTHR45825:SF11">
    <property type="entry name" value="ALPHA AMYLASE DOMAIN-CONTAINING PROTEIN"/>
    <property type="match status" value="1"/>
</dbReference>
<dbReference type="PANTHER" id="PTHR45825">
    <property type="entry name" value="GRANULE-BOUND STARCH SYNTHASE 1, CHLOROPLASTIC/AMYLOPLASTIC"/>
    <property type="match status" value="1"/>
</dbReference>
<dbReference type="Pfam" id="PF08323">
    <property type="entry name" value="Glyco_transf_5"/>
    <property type="match status" value="1"/>
</dbReference>
<dbReference type="Pfam" id="PF00534">
    <property type="entry name" value="Glycos_transf_1"/>
    <property type="match status" value="1"/>
</dbReference>
<dbReference type="SUPFAM" id="SSF53756">
    <property type="entry name" value="UDP-Glycosyltransferase/glycogen phosphorylase"/>
    <property type="match status" value="1"/>
</dbReference>
<protein>
    <recommendedName>
        <fullName evidence="1">Glycogen synthase</fullName>
        <ecNumber evidence="1">2.4.1.21</ecNumber>
    </recommendedName>
    <alternativeName>
        <fullName evidence="1">Starch [bacterial glycogen] synthase</fullName>
    </alternativeName>
</protein>
<reference key="1">
    <citation type="journal article" date="2003" name="Nature">
        <title>The genome sequence of Bacillus anthracis Ames and comparison to closely related bacteria.</title>
        <authorList>
            <person name="Read T.D."/>
            <person name="Peterson S.N."/>
            <person name="Tourasse N.J."/>
            <person name="Baillie L.W."/>
            <person name="Paulsen I.T."/>
            <person name="Nelson K.E."/>
            <person name="Tettelin H."/>
            <person name="Fouts D.E."/>
            <person name="Eisen J.A."/>
            <person name="Gill S.R."/>
            <person name="Holtzapple E.K."/>
            <person name="Okstad O.A."/>
            <person name="Helgason E."/>
            <person name="Rilstone J."/>
            <person name="Wu M."/>
            <person name="Kolonay J.F."/>
            <person name="Beanan M.J."/>
            <person name="Dodson R.J."/>
            <person name="Brinkac L.M."/>
            <person name="Gwinn M.L."/>
            <person name="DeBoy R.T."/>
            <person name="Madpu R."/>
            <person name="Daugherty S.C."/>
            <person name="Durkin A.S."/>
            <person name="Haft D.H."/>
            <person name="Nelson W.C."/>
            <person name="Peterson J.D."/>
            <person name="Pop M."/>
            <person name="Khouri H.M."/>
            <person name="Radune D."/>
            <person name="Benton J.L."/>
            <person name="Mahamoud Y."/>
            <person name="Jiang L."/>
            <person name="Hance I.R."/>
            <person name="Weidman J.F."/>
            <person name="Berry K.J."/>
            <person name="Plaut R.D."/>
            <person name="Wolf A.M."/>
            <person name="Watkins K.L."/>
            <person name="Nierman W.C."/>
            <person name="Hazen A."/>
            <person name="Cline R.T."/>
            <person name="Redmond C."/>
            <person name="Thwaite J.E."/>
            <person name="White O."/>
            <person name="Salzberg S.L."/>
            <person name="Thomason B."/>
            <person name="Friedlander A.M."/>
            <person name="Koehler T.M."/>
            <person name="Hanna P.C."/>
            <person name="Kolstoe A.-B."/>
            <person name="Fraser C.M."/>
        </authorList>
    </citation>
    <scope>NUCLEOTIDE SEQUENCE [LARGE SCALE GENOMIC DNA]</scope>
    <source>
        <strain>Ames / isolate Porton</strain>
    </source>
</reference>
<reference key="2">
    <citation type="journal article" date="2009" name="J. Bacteriol.">
        <title>The complete genome sequence of Bacillus anthracis Ames 'Ancestor'.</title>
        <authorList>
            <person name="Ravel J."/>
            <person name="Jiang L."/>
            <person name="Stanley S.T."/>
            <person name="Wilson M.R."/>
            <person name="Decker R.S."/>
            <person name="Read T.D."/>
            <person name="Worsham P."/>
            <person name="Keim P.S."/>
            <person name="Salzberg S.L."/>
            <person name="Fraser-Liggett C.M."/>
            <person name="Rasko D.A."/>
        </authorList>
    </citation>
    <scope>NUCLEOTIDE SEQUENCE [LARGE SCALE GENOMIC DNA]</scope>
    <source>
        <strain>Ames ancestor</strain>
    </source>
</reference>
<reference key="3">
    <citation type="submission" date="2004-01" db="EMBL/GenBank/DDBJ databases">
        <title>Complete genome sequence of Bacillus anthracis Sterne.</title>
        <authorList>
            <person name="Brettin T.S."/>
            <person name="Bruce D."/>
            <person name="Challacombe J.F."/>
            <person name="Gilna P."/>
            <person name="Han C."/>
            <person name="Hill K."/>
            <person name="Hitchcock P."/>
            <person name="Jackson P."/>
            <person name="Keim P."/>
            <person name="Longmire J."/>
            <person name="Lucas S."/>
            <person name="Okinaka R."/>
            <person name="Richardson P."/>
            <person name="Rubin E."/>
            <person name="Tice H."/>
        </authorList>
    </citation>
    <scope>NUCLEOTIDE SEQUENCE [LARGE SCALE GENOMIC DNA]</scope>
    <source>
        <strain>Sterne</strain>
    </source>
</reference>
<evidence type="ECO:0000255" key="1">
    <source>
        <dbReference type="HAMAP-Rule" id="MF_00484"/>
    </source>
</evidence>
<evidence type="ECO:0000305" key="2"/>
<proteinExistence type="inferred from homology"/>
<comment type="function">
    <text evidence="1">Synthesizes alpha-1,4-glucan chains using ADP-glucose.</text>
</comment>
<comment type="catalytic activity">
    <reaction evidence="1">
        <text>[(1-&gt;4)-alpha-D-glucosyl](n) + ADP-alpha-D-glucose = [(1-&gt;4)-alpha-D-glucosyl](n+1) + ADP + H(+)</text>
        <dbReference type="Rhea" id="RHEA:18189"/>
        <dbReference type="Rhea" id="RHEA-COMP:9584"/>
        <dbReference type="Rhea" id="RHEA-COMP:9587"/>
        <dbReference type="ChEBI" id="CHEBI:15378"/>
        <dbReference type="ChEBI" id="CHEBI:15444"/>
        <dbReference type="ChEBI" id="CHEBI:57498"/>
        <dbReference type="ChEBI" id="CHEBI:456216"/>
        <dbReference type="EC" id="2.4.1.21"/>
    </reaction>
</comment>
<comment type="pathway">
    <text evidence="1">Glycan biosynthesis; glycogen biosynthesis.</text>
</comment>
<comment type="similarity">
    <text evidence="1">Belongs to the glycosyltransferase 1 family. Bacterial/plant glycogen synthase subfamily.</text>
</comment>
<comment type="sequence caution" evidence="2">
    <conflict type="erroneous initiation">
        <sequence resource="EMBL-CDS" id="AAT57052"/>
    </conflict>
</comment>